<reference key="1">
    <citation type="journal article" date="2012" name="Proc. Natl. Acad. Sci. U.S.A.">
        <title>Nonseed plant Selaginella moellendorfii has both seed plant and microbial types of terpene synthases.</title>
        <authorList>
            <person name="Li G."/>
            <person name="Kollner T.G."/>
            <person name="Yin Y."/>
            <person name="Jiang Y."/>
            <person name="Chen H."/>
            <person name="Xu Y."/>
            <person name="Gershenzon J."/>
            <person name="Pichersky E."/>
            <person name="Chen F."/>
        </authorList>
    </citation>
    <scope>NUCLEOTIDE SEQUENCE [MRNA]</scope>
    <scope>FUNCTION</scope>
    <scope>CATALYTIC ACTIVITY</scope>
    <scope>GENE FAMILY</scope>
    <scope>NOMENCLATURE</scope>
</reference>
<reference key="2">
    <citation type="journal article" date="2011" name="Science">
        <title>The Selaginella genome identifies genetic changes associated with the evolution of vascular plants.</title>
        <authorList>
            <person name="Banks J.A."/>
            <person name="Nishiyama T."/>
            <person name="Hasebe M."/>
            <person name="Bowman J.L."/>
            <person name="Gribskov M."/>
            <person name="dePamphilis C."/>
            <person name="Albert V.A."/>
            <person name="Aono N."/>
            <person name="Aoyama T."/>
            <person name="Ambrose B.A."/>
            <person name="Ashton N.W."/>
            <person name="Axtell M.J."/>
            <person name="Barker E."/>
            <person name="Barker M.S."/>
            <person name="Bennetzen J.L."/>
            <person name="Bonawitz N.D."/>
            <person name="Chapple C."/>
            <person name="Cheng C."/>
            <person name="Correa L.G."/>
            <person name="Dacre M."/>
            <person name="DeBarry J."/>
            <person name="Dreyer I."/>
            <person name="Elias M."/>
            <person name="Engstrom E.M."/>
            <person name="Estelle M."/>
            <person name="Feng L."/>
            <person name="Finet C."/>
            <person name="Floyd S.K."/>
            <person name="Frommer W.B."/>
            <person name="Fujita T."/>
            <person name="Gramzow L."/>
            <person name="Gutensohn M."/>
            <person name="Harholt J."/>
            <person name="Hattori M."/>
            <person name="Heyl A."/>
            <person name="Hirai T."/>
            <person name="Hiwatashi Y."/>
            <person name="Ishikawa M."/>
            <person name="Iwata M."/>
            <person name="Karol K.G."/>
            <person name="Koehler B."/>
            <person name="Kolukisaoglu U."/>
            <person name="Kubo M."/>
            <person name="Kurata T."/>
            <person name="Lalonde S."/>
            <person name="Li K."/>
            <person name="Li Y."/>
            <person name="Litt A."/>
            <person name="Lyons E."/>
            <person name="Manning G."/>
            <person name="Maruyama T."/>
            <person name="Michael T.P."/>
            <person name="Mikami K."/>
            <person name="Miyazaki S."/>
            <person name="Morinaga S."/>
            <person name="Murata T."/>
            <person name="Mueller-Roeber B."/>
            <person name="Nelson D.R."/>
            <person name="Obara M."/>
            <person name="Oguri Y."/>
            <person name="Olmstead R.G."/>
            <person name="Onodera N."/>
            <person name="Petersen B.L."/>
            <person name="Pils B."/>
            <person name="Prigge M."/>
            <person name="Rensing S.A."/>
            <person name="Riano-Pachon D.M."/>
            <person name="Roberts A.W."/>
            <person name="Sato Y."/>
            <person name="Scheller H.V."/>
            <person name="Schulz B."/>
            <person name="Schulz C."/>
            <person name="Shakirov E.V."/>
            <person name="Shibagaki N."/>
            <person name="Shinohara N."/>
            <person name="Shippen D.E."/>
            <person name="Soerensen I."/>
            <person name="Sotooka R."/>
            <person name="Sugimoto N."/>
            <person name="Sugita M."/>
            <person name="Sumikawa N."/>
            <person name="Tanurdzic M."/>
            <person name="Theissen G."/>
            <person name="Ulvskov P."/>
            <person name="Wakazuki S."/>
            <person name="Weng J.K."/>
            <person name="Willats W.W."/>
            <person name="Wipf D."/>
            <person name="Wolf P.G."/>
            <person name="Yang L."/>
            <person name="Zimmer A.D."/>
            <person name="Zhu Q."/>
            <person name="Mitros T."/>
            <person name="Hellsten U."/>
            <person name="Loque D."/>
            <person name="Otillar R."/>
            <person name="Salamov A."/>
            <person name="Schmutz J."/>
            <person name="Shapiro H."/>
            <person name="Lindquist E."/>
            <person name="Lucas S."/>
            <person name="Rokhsar D."/>
            <person name="Grigoriev I.V."/>
        </authorList>
    </citation>
    <scope>NUCLEOTIDE SEQUENCE [LARGE SCALE GENOMIC DNA]</scope>
</reference>
<keyword id="KW-0413">Isomerase</keyword>
<keyword id="KW-0460">Magnesium</keyword>
<keyword id="KW-0479">Metal-binding</keyword>
<keyword id="KW-1185">Reference proteome</keyword>
<comment type="function">
    <text evidence="4">Monofunctional diterpene synthase converting geranylgeranyl diphosphate to copalyl diphosphate.</text>
</comment>
<comment type="catalytic activity">
    <reaction evidence="4">
        <text>(2E,6E,10E)-geranylgeranyl diphosphate = (+)-copalyl diphosphate</text>
        <dbReference type="Rhea" id="RHEA:24316"/>
        <dbReference type="ChEBI" id="CHEBI:58635"/>
        <dbReference type="ChEBI" id="CHEBI:58756"/>
        <dbReference type="EC" id="5.5.1.12"/>
    </reaction>
</comment>
<comment type="cofactor">
    <cofactor evidence="1">
        <name>Mg(2+)</name>
        <dbReference type="ChEBI" id="CHEBI:18420"/>
    </cofactor>
</comment>
<comment type="pathway">
    <text>Secondary metabolite biosynthesis; terpenoid biosynthesis.</text>
</comment>
<comment type="domain">
    <text evidence="1">The Asp-Xaa-Asp-Asp (DXDD) motif is important for the catalytic activity, presumably through binding to Mg(2+).</text>
</comment>
<comment type="miscellaneous">
    <text>S.moellendorffii contains two distinct types of functional terpene synthases (TPS) genes, the typical seed plants TPS genes (SmTPSs) and the microbial type TPS genes (SmMTPSLs).</text>
</comment>
<comment type="similarity">
    <text evidence="5">Belongs to the terpene synthase family.</text>
</comment>
<comment type="sequence caution" evidence="5">
    <conflict type="erroneous gene model prediction">
        <sequence resource="EMBL-CDS" id="EFJ31965"/>
    </conflict>
</comment>
<organism>
    <name type="scientific">Selaginella moellendorffii</name>
    <name type="common">Spikemoss</name>
    <dbReference type="NCBI Taxonomy" id="88036"/>
    <lineage>
        <taxon>Eukaryota</taxon>
        <taxon>Viridiplantae</taxon>
        <taxon>Streptophyta</taxon>
        <taxon>Embryophyta</taxon>
        <taxon>Tracheophyta</taxon>
        <taxon>Lycopodiopsida</taxon>
        <taxon>Selaginellales</taxon>
        <taxon>Selaginellaceae</taxon>
        <taxon>Selaginella</taxon>
    </lineage>
</organism>
<name>TPS10_SELML</name>
<accession>J9R388</accession>
<accession>D8R7Z3</accession>
<proteinExistence type="evidence at protein level"/>
<evidence type="ECO:0000250" key="1"/>
<evidence type="ECO:0000250" key="2">
    <source>
        <dbReference type="UniProtKB" id="C7BKP9"/>
    </source>
</evidence>
<evidence type="ECO:0000250" key="3">
    <source>
        <dbReference type="UniProtKB" id="Q38802"/>
    </source>
</evidence>
<evidence type="ECO:0000269" key="4">
    <source>
    </source>
</evidence>
<evidence type="ECO:0000305" key="5"/>
<sequence>MWELVETVRSMLNSLHDGEISVSAYDTAWVARVPALDGSNKPQFPMCLNWIMNNQLEDGSWGDRDLFLTYDRICSALACAIALKTWNTGDKIVHKALEFIRKTMPKMELEDSTHMPIGFEIVFPAMIEEAMALELDIDYREPVLQTIYAERKKKLERIPMNVVQNYPTTLLHSLEGLHKTIDWDKVIKLQSPDGSLLFSPASTACALMHTGNEKCLQYLNNLVKRFNCAVPNVYPVDLFEHLWIVDRLQRLGISRYFTQEIKSALDYVYRYWTDKGIAWARGSPVQDADDTSMAFRLLRSHGYDISPDAFKTFQEGDSFVCFSGQAGQAVTGMYNLYRASQVMFPGETILEEAGSFARKFLEGKRQENQLYDKWIISKDLPGEVEFALDNPMHARLERLATRRYIDQYAADDVWIGKSLYRMPFVNNPIFLELAKADFNMCRALHRKEFQQLERWYDESSLSMFKGFSRSKLEQTFYSAAATIFEPELSPARLIWSQCWFISLGINEYFDHQGSTKELEDLINNVERWNVNSLGNCSAEVKILFVELYNIVQNHSKQGFLYQGRSIGGALREIWKTWLSSLLQRTKWKMSDNNPTLEEYLKASHSSIEPAVRSTMYFVGETLATTGDIKDSAICQMMNTASRLVQDTHTDKVDSSLNSITIYLEENPQLTKSEALSEVQALANKNMQKLLYETLQPGALPQACKQLFLNAARIMNVFPGTNKVQAKLSNHVKRVLSQPVL</sequence>
<gene>
    <name type="primary">CPS2</name>
    <name type="ORF">SELMODRAFT_408338</name>
</gene>
<feature type="chain" id="PRO_0000421939" description="Copalyl diphosphate synthase 2">
    <location>
        <begin position="1"/>
        <end position="740"/>
    </location>
</feature>
<feature type="short sequence motif" description="DXDD motif">
    <location>
        <begin position="287"/>
        <end position="290"/>
    </location>
</feature>
<feature type="binding site" evidence="3">
    <location>
        <position position="154"/>
    </location>
    <ligand>
        <name>substrate</name>
    </ligand>
</feature>
<feature type="binding site" evidence="2">
    <location>
        <position position="287"/>
    </location>
    <ligand>
        <name>Mg(2+)</name>
        <dbReference type="ChEBI" id="CHEBI:18420"/>
    </ligand>
</feature>
<feature type="binding site" evidence="2">
    <location>
        <position position="289"/>
    </location>
    <ligand>
        <name>Mg(2+)</name>
        <dbReference type="ChEBI" id="CHEBI:18420"/>
    </ligand>
</feature>
<feature type="binding site" evidence="3">
    <location>
        <position position="373"/>
    </location>
    <ligand>
        <name>substrate</name>
    </ligand>
</feature>
<feature type="sequence conflict" description="In Ref. 1; AFR34003." evidence="5" ref="1">
    <original>K</original>
    <variation>T</variation>
    <location>
        <position position="41"/>
    </location>
</feature>
<protein>
    <recommendedName>
        <fullName>Copalyl diphosphate synthase 2</fullName>
        <ecNumber>5.5.1.12</ecNumber>
    </recommendedName>
    <alternativeName>
        <fullName>Terpene synthase 10</fullName>
        <shortName>SmTPS10</shortName>
    </alternativeName>
</protein>
<dbReference type="EC" id="5.5.1.12"/>
<dbReference type="EMBL" id="JX413783">
    <property type="protein sequence ID" value="AFR34003.1"/>
    <property type="molecule type" value="mRNA"/>
</dbReference>
<dbReference type="EMBL" id="GL377573">
    <property type="protein sequence ID" value="EFJ31965.1"/>
    <property type="status" value="ALT_SEQ"/>
    <property type="molecule type" value="Genomic_DNA"/>
</dbReference>
<dbReference type="RefSeq" id="XP_002967366.1">
    <property type="nucleotide sequence ID" value="XM_002967320.1"/>
</dbReference>
<dbReference type="SMR" id="J9R388"/>
<dbReference type="FunCoup" id="J9R388">
    <property type="interactions" value="37"/>
</dbReference>
<dbReference type="STRING" id="88036.J9R388"/>
<dbReference type="KEGG" id="smo:SELMODRAFT_408338"/>
<dbReference type="eggNOG" id="ENOG502QQN6">
    <property type="taxonomic scope" value="Eukaryota"/>
</dbReference>
<dbReference type="HOGENOM" id="CLU_003125_2_0_1"/>
<dbReference type="InParanoid" id="J9R388"/>
<dbReference type="UniPathway" id="UPA00213"/>
<dbReference type="Proteomes" id="UP000001514">
    <property type="component" value="Unassembled WGS sequence"/>
</dbReference>
<dbReference type="GO" id="GO:0050559">
    <property type="term" value="F:copalyl diphosphate synthase activity"/>
    <property type="evidence" value="ECO:0007669"/>
    <property type="project" value="UniProtKB-EC"/>
</dbReference>
<dbReference type="GO" id="GO:0000287">
    <property type="term" value="F:magnesium ion binding"/>
    <property type="evidence" value="ECO:0000318"/>
    <property type="project" value="GO_Central"/>
</dbReference>
<dbReference type="GO" id="GO:0010333">
    <property type="term" value="F:terpene synthase activity"/>
    <property type="evidence" value="ECO:0000318"/>
    <property type="project" value="GO_Central"/>
</dbReference>
<dbReference type="GO" id="GO:0016102">
    <property type="term" value="P:diterpenoid biosynthetic process"/>
    <property type="evidence" value="ECO:0000318"/>
    <property type="project" value="GO_Central"/>
</dbReference>
<dbReference type="CDD" id="cd00684">
    <property type="entry name" value="Terpene_cyclase_plant_C1"/>
    <property type="match status" value="1"/>
</dbReference>
<dbReference type="FunFam" id="1.50.10.130:FF:000002">
    <property type="entry name" value="Ent-copalyl diphosphate synthase, chloroplastic"/>
    <property type="match status" value="1"/>
</dbReference>
<dbReference type="Gene3D" id="1.50.10.160">
    <property type="match status" value="1"/>
</dbReference>
<dbReference type="Gene3D" id="1.10.600.10">
    <property type="entry name" value="Farnesyl Diphosphate Synthase"/>
    <property type="match status" value="1"/>
</dbReference>
<dbReference type="Gene3D" id="1.50.10.130">
    <property type="entry name" value="Terpene synthase, N-terminal domain"/>
    <property type="match status" value="1"/>
</dbReference>
<dbReference type="InterPro" id="IPR008949">
    <property type="entry name" value="Isoprenoid_synthase_dom_sf"/>
</dbReference>
<dbReference type="InterPro" id="IPR044814">
    <property type="entry name" value="Terpene_cyclase_plant_C1"/>
</dbReference>
<dbReference type="InterPro" id="IPR001906">
    <property type="entry name" value="Terpene_synth_N"/>
</dbReference>
<dbReference type="InterPro" id="IPR036965">
    <property type="entry name" value="Terpene_synth_N_sf"/>
</dbReference>
<dbReference type="InterPro" id="IPR050148">
    <property type="entry name" value="Terpene_synthase-like"/>
</dbReference>
<dbReference type="InterPro" id="IPR005630">
    <property type="entry name" value="Terpene_synthase_metal-bd"/>
</dbReference>
<dbReference type="InterPro" id="IPR008930">
    <property type="entry name" value="Terpenoid_cyclase/PrenylTrfase"/>
</dbReference>
<dbReference type="PANTHER" id="PTHR31739">
    <property type="entry name" value="ENT-COPALYL DIPHOSPHATE SYNTHASE, CHLOROPLASTIC"/>
    <property type="match status" value="1"/>
</dbReference>
<dbReference type="PANTHER" id="PTHR31739:SF4">
    <property type="entry name" value="ENT-COPALYL DIPHOSPHATE SYNTHASE, CHLOROPLASTIC"/>
    <property type="match status" value="1"/>
</dbReference>
<dbReference type="Pfam" id="PF01397">
    <property type="entry name" value="Terpene_synth"/>
    <property type="match status" value="1"/>
</dbReference>
<dbReference type="Pfam" id="PF03936">
    <property type="entry name" value="Terpene_synth_C"/>
    <property type="match status" value="1"/>
</dbReference>
<dbReference type="SFLD" id="SFLDG01014">
    <property type="entry name" value="Terpene_Cyclase_Like_1_N-term"/>
    <property type="match status" value="1"/>
</dbReference>
<dbReference type="SFLD" id="SFLDG01605">
    <property type="entry name" value="Terpene_Cyclase_Like_1_N-term"/>
    <property type="match status" value="1"/>
</dbReference>
<dbReference type="SUPFAM" id="SSF48239">
    <property type="entry name" value="Terpenoid cyclases/Protein prenyltransferases"/>
    <property type="match status" value="2"/>
</dbReference>
<dbReference type="SUPFAM" id="SSF48576">
    <property type="entry name" value="Terpenoid synthases"/>
    <property type="match status" value="1"/>
</dbReference>